<dbReference type="EMBL" id="AM903075">
    <property type="protein sequence ID" value="CAP17488.1"/>
    <property type="molecule type" value="mRNA"/>
</dbReference>
<dbReference type="SMR" id="D4YWD0"/>
<dbReference type="GO" id="GO:0005576">
    <property type="term" value="C:extracellular region"/>
    <property type="evidence" value="ECO:0007669"/>
    <property type="project" value="UniProtKB-SubCell"/>
</dbReference>
<dbReference type="GO" id="GO:0016020">
    <property type="term" value="C:membrane"/>
    <property type="evidence" value="ECO:0007669"/>
    <property type="project" value="UniProtKB-KW"/>
</dbReference>
<dbReference type="GO" id="GO:0044218">
    <property type="term" value="C:other organism cell membrane"/>
    <property type="evidence" value="ECO:0007669"/>
    <property type="project" value="UniProtKB-KW"/>
</dbReference>
<dbReference type="GO" id="GO:0042742">
    <property type="term" value="P:defense response to bacterium"/>
    <property type="evidence" value="ECO:0007669"/>
    <property type="project" value="UniProtKB-KW"/>
</dbReference>
<dbReference type="GO" id="GO:0050832">
    <property type="term" value="P:defense response to fungus"/>
    <property type="evidence" value="ECO:0007669"/>
    <property type="project" value="UniProtKB-KW"/>
</dbReference>
<dbReference type="GO" id="GO:0045087">
    <property type="term" value="P:innate immune response"/>
    <property type="evidence" value="ECO:0007669"/>
    <property type="project" value="UniProtKB-KW"/>
</dbReference>
<dbReference type="GO" id="GO:0031640">
    <property type="term" value="P:killing of cells of another organism"/>
    <property type="evidence" value="ECO:0007669"/>
    <property type="project" value="UniProtKB-KW"/>
</dbReference>
<dbReference type="InterPro" id="IPR004275">
    <property type="entry name" value="Frog_antimicrobial_propeptide"/>
</dbReference>
<dbReference type="Pfam" id="PF03032">
    <property type="entry name" value="FSAP_sig_propep"/>
    <property type="match status" value="1"/>
</dbReference>
<keyword id="KW-0027">Amidation</keyword>
<keyword id="KW-0878">Amphibian defense peptide</keyword>
<keyword id="KW-0044">Antibiotic</keyword>
<keyword id="KW-0929">Antimicrobial</keyword>
<keyword id="KW-0165">Cleavage on pair of basic residues</keyword>
<keyword id="KW-0204">Cytolysis</keyword>
<keyword id="KW-0903">Direct protein sequencing</keyword>
<keyword id="KW-0295">Fungicide</keyword>
<keyword id="KW-0354">Hemolysis</keyword>
<keyword id="KW-0391">Immunity</keyword>
<keyword id="KW-0399">Innate immunity</keyword>
<keyword id="KW-0472">Membrane</keyword>
<keyword id="KW-0964">Secreted</keyword>
<keyword id="KW-0732">Signal</keyword>
<keyword id="KW-1052">Target cell membrane</keyword>
<keyword id="KW-1053">Target membrane</keyword>
<reference key="1">
    <citation type="journal article" date="2010" name="J. Biol. Chem.">
        <title>Temporin-SHf, a new type of phe-rich and hydrophobic ultrashort antimicrobial peptide.</title>
        <authorList>
            <person name="Abbassi F."/>
            <person name="Lequin O."/>
            <person name="Piesse C."/>
            <person name="Goasdoue N."/>
            <person name="Foulon T."/>
            <person name="Nicolas P."/>
            <person name="Ladram A."/>
        </authorList>
    </citation>
    <scope>NUCLEOTIDE SEQUENCE [MRNA]</scope>
    <scope>AMIDATION AT PHE-51</scope>
    <source>
        <tissue>Skin</tissue>
    </source>
</reference>
<reference key="2">
    <citation type="journal article" date="2013" name="Biochimie">
        <title>Antibacterial and leishmanicidal activities of temporin-SHd, a 17-residue long membrane-damaging peptide.</title>
        <authorList>
            <person name="Abbassi F."/>
            <person name="Raja Z."/>
            <person name="Oury B."/>
            <person name="Gazanion E."/>
            <person name="Piesse C."/>
            <person name="Sereno D."/>
            <person name="Nicolas P."/>
            <person name="Foulon T."/>
            <person name="Ladram A."/>
        </authorList>
    </citation>
    <scope>FUNCTION</scope>
    <scope>PROTEIN SEQUENCE OF 35-51</scope>
    <scope>MASS SPECTROMETRY</scope>
    <scope>SUBCELLULAR LOCATION</scope>
    <scope>SYNTHESIS OF 35-51</scope>
</reference>
<evidence type="ECO:0000250" key="1">
    <source>
        <dbReference type="UniProtKB" id="P79874"/>
    </source>
</evidence>
<evidence type="ECO:0000269" key="2">
    <source>
    </source>
</evidence>
<evidence type="ECO:0000269" key="3">
    <source>
    </source>
</evidence>
<evidence type="ECO:0000303" key="4">
    <source>
    </source>
</evidence>
<evidence type="ECO:0000303" key="5">
    <source>
    </source>
</evidence>
<evidence type="ECO:0000305" key="6"/>
<evidence type="ECO:0000305" key="7">
    <source>
    </source>
</evidence>
<evidence type="ECO:0000305" key="8">
    <source>
    </source>
</evidence>
<evidence type="ECO:0000312" key="9">
    <source>
        <dbReference type="EMBL" id="CAP17488.1"/>
    </source>
</evidence>
<proteinExistence type="evidence at protein level"/>
<sequence>FLGTINLSLCEQERDADEEKRDEPDESDVEVEKRFLPAALAGIGGILGKLFGK</sequence>
<protein>
    <recommendedName>
        <fullName evidence="4 5">Temporin-SHd</fullName>
        <shortName evidence="4 5">Temp-SHd</shortName>
    </recommendedName>
    <alternativeName>
        <fullName evidence="9">Temporin-1Sd</fullName>
        <shortName evidence="9">Temp-1Sd</shortName>
    </alternativeName>
</protein>
<name>TPD_PELSA</name>
<feature type="signal peptide" evidence="1">
    <location>
        <begin position="1" status="less than"/>
        <end position="10"/>
    </location>
</feature>
<feature type="propeptide" id="PRO_0000450301" evidence="7">
    <location>
        <begin position="11"/>
        <end position="34"/>
    </location>
</feature>
<feature type="peptide" id="PRO_0000450302" description="Temporin-SHd" evidence="2">
    <location>
        <begin position="35"/>
        <end position="51"/>
    </location>
</feature>
<feature type="modified residue" description="Phenylalanine amide" evidence="2">
    <location>
        <position position="51"/>
    </location>
</feature>
<feature type="non-terminal residue" evidence="9">
    <location>
        <position position="1"/>
    </location>
</feature>
<organism>
    <name type="scientific">Pelophylax saharicus</name>
    <name type="common">Sahara frog</name>
    <name type="synonym">Rana saharica</name>
    <dbReference type="NCBI Taxonomy" id="70019"/>
    <lineage>
        <taxon>Eukaryota</taxon>
        <taxon>Metazoa</taxon>
        <taxon>Chordata</taxon>
        <taxon>Craniata</taxon>
        <taxon>Vertebrata</taxon>
        <taxon>Euteleostomi</taxon>
        <taxon>Amphibia</taxon>
        <taxon>Batrachia</taxon>
        <taxon>Anura</taxon>
        <taxon>Neobatrachia</taxon>
        <taxon>Ranoidea</taxon>
        <taxon>Ranidae</taxon>
        <taxon>Pelophylax</taxon>
    </lineage>
</organism>
<comment type="function">
    <text evidence="3">Non-amphipathic mildly cationic alpha-helical antimicrobial peptide with potent activity against Gram-positive (including methicillin-resistant Staphylococcus aureus (MRSA)) and Gram-negative bacteria, and some fungi, as well as against Trypanosoma and Leishmania (both promastigote and amastigote forms) (PubMed:23116712). Strongly and selectively perturbs anionic bilayer membranes by interacting with the polar head groups and acyl region of the phospholipids, with formation of regions of two coexisting phases, one phase rich in peptide and the other lipid-rich (PubMed:23116712). Shows low hemolytic activity (LC(50)=44 uM) and a low toxicity for human monocytes THP-1 and THP-1-derived macrophages (PubMed:23116712). Is not toxic to human hepatoma-derived cells (PubMed:23116712).</text>
</comment>
<comment type="subcellular location">
    <subcellularLocation>
        <location evidence="3">Secreted</location>
    </subcellularLocation>
    <subcellularLocation>
        <location evidence="3">Target cell membrane</location>
    </subcellularLocation>
    <text evidence="8">Deeply inserts into the lipid bilayer.</text>
</comment>
<comment type="mass spectrometry"/>
<comment type="similarity">
    <text evidence="6">Belongs to the frog skin active peptide (FSAP) family. Temporin subfamily.</text>
</comment>
<comment type="online information" name="The antimicrobial peptide database">
    <link uri="https://wangapd3.com/database/query_output.php?ID=02118"/>
</comment>
<accession>D4YWD0</accession>